<organism>
    <name type="scientific">Hyphomonas neptunium (strain ATCC 15444)</name>
    <dbReference type="NCBI Taxonomy" id="228405"/>
    <lineage>
        <taxon>Bacteria</taxon>
        <taxon>Pseudomonadati</taxon>
        <taxon>Pseudomonadota</taxon>
        <taxon>Alphaproteobacteria</taxon>
        <taxon>Hyphomonadales</taxon>
        <taxon>Hyphomonadaceae</taxon>
        <taxon>Hyphomonas</taxon>
    </lineage>
</organism>
<name>PUR7_HYPNA</name>
<gene>
    <name evidence="1" type="primary">purC</name>
    <name type="ordered locus">HNE_2605</name>
</gene>
<reference key="1">
    <citation type="journal article" date="2006" name="J. Bacteriol.">
        <title>Comparative genomic evidence for a close relationship between the dimorphic prosthecate bacteria Hyphomonas neptunium and Caulobacter crescentus.</title>
        <authorList>
            <person name="Badger J.H."/>
            <person name="Hoover T.R."/>
            <person name="Brun Y.V."/>
            <person name="Weiner R.M."/>
            <person name="Laub M.T."/>
            <person name="Alexandre G."/>
            <person name="Mrazek J."/>
            <person name="Ren Q."/>
            <person name="Paulsen I.T."/>
            <person name="Nelson K.E."/>
            <person name="Khouri H.M."/>
            <person name="Radune D."/>
            <person name="Sosa J."/>
            <person name="Dodson R.J."/>
            <person name="Sullivan S.A."/>
            <person name="Rosovitz M.J."/>
            <person name="Madupu R."/>
            <person name="Brinkac L.M."/>
            <person name="Durkin A.S."/>
            <person name="Daugherty S.C."/>
            <person name="Kothari S.P."/>
            <person name="Giglio M.G."/>
            <person name="Zhou L."/>
            <person name="Haft D.H."/>
            <person name="Selengut J.D."/>
            <person name="Davidsen T.M."/>
            <person name="Yang Q."/>
            <person name="Zafar N."/>
            <person name="Ward N.L."/>
        </authorList>
    </citation>
    <scope>NUCLEOTIDE SEQUENCE [LARGE SCALE GENOMIC DNA]</scope>
    <source>
        <strain>ATCC 15444</strain>
    </source>
</reference>
<sequence>MNKRRVIYEGKAKILYEGPEPGTLIQYFKDDTTAFDATKKAVLDGKGVLNNRISEFIMTHLTSVGVPNHFIRRLNMREQLVRKVDIIPLEVVVRNIAAGSLSTRLGIPEGQSLPRPLVEFYFKNDALHDPMVSEEHIAAFGWATAQEYDDIIALALRVNDFMSGLFAGAGIRLVDFKIEFGRWFENDHDMPRILLADEISPDSCRLWDAKTGEKMDKDRFRRDMGGVTEAYAEVARRLGIIRESGEETDNVIHFTGGSK</sequence>
<keyword id="KW-0067">ATP-binding</keyword>
<keyword id="KW-0436">Ligase</keyword>
<keyword id="KW-0547">Nucleotide-binding</keyword>
<keyword id="KW-0658">Purine biosynthesis</keyword>
<keyword id="KW-1185">Reference proteome</keyword>
<comment type="catalytic activity">
    <reaction evidence="1">
        <text>5-amino-1-(5-phospho-D-ribosyl)imidazole-4-carboxylate + L-aspartate + ATP = (2S)-2-[5-amino-1-(5-phospho-beta-D-ribosyl)imidazole-4-carboxamido]succinate + ADP + phosphate + 2 H(+)</text>
        <dbReference type="Rhea" id="RHEA:22628"/>
        <dbReference type="ChEBI" id="CHEBI:15378"/>
        <dbReference type="ChEBI" id="CHEBI:29991"/>
        <dbReference type="ChEBI" id="CHEBI:30616"/>
        <dbReference type="ChEBI" id="CHEBI:43474"/>
        <dbReference type="ChEBI" id="CHEBI:58443"/>
        <dbReference type="ChEBI" id="CHEBI:77657"/>
        <dbReference type="ChEBI" id="CHEBI:456216"/>
        <dbReference type="EC" id="6.3.2.6"/>
    </reaction>
</comment>
<comment type="pathway">
    <text evidence="1">Purine metabolism; IMP biosynthesis via de novo pathway; 5-amino-1-(5-phospho-D-ribosyl)imidazole-4-carboxamide from 5-amino-1-(5-phospho-D-ribosyl)imidazole-4-carboxylate: step 1/2.</text>
</comment>
<comment type="similarity">
    <text evidence="1">Belongs to the SAICAR synthetase family.</text>
</comment>
<accession>Q0BYZ9</accession>
<protein>
    <recommendedName>
        <fullName evidence="1">Phosphoribosylaminoimidazole-succinocarboxamide synthase</fullName>
        <ecNumber evidence="1">6.3.2.6</ecNumber>
    </recommendedName>
    <alternativeName>
        <fullName evidence="1">SAICAR synthetase</fullName>
    </alternativeName>
</protein>
<dbReference type="EC" id="6.3.2.6" evidence="1"/>
<dbReference type="EMBL" id="CP000158">
    <property type="protein sequence ID" value="ABI77282.1"/>
    <property type="molecule type" value="Genomic_DNA"/>
</dbReference>
<dbReference type="RefSeq" id="WP_011647592.1">
    <property type="nucleotide sequence ID" value="NC_008358.1"/>
</dbReference>
<dbReference type="SMR" id="Q0BYZ9"/>
<dbReference type="STRING" id="228405.HNE_2605"/>
<dbReference type="KEGG" id="hne:HNE_2605"/>
<dbReference type="eggNOG" id="COG0152">
    <property type="taxonomic scope" value="Bacteria"/>
</dbReference>
<dbReference type="HOGENOM" id="CLU_061495_2_0_5"/>
<dbReference type="UniPathway" id="UPA00074">
    <property type="reaction ID" value="UER00131"/>
</dbReference>
<dbReference type="Proteomes" id="UP000001959">
    <property type="component" value="Chromosome"/>
</dbReference>
<dbReference type="GO" id="GO:0005829">
    <property type="term" value="C:cytosol"/>
    <property type="evidence" value="ECO:0007669"/>
    <property type="project" value="TreeGrafter"/>
</dbReference>
<dbReference type="GO" id="GO:0005524">
    <property type="term" value="F:ATP binding"/>
    <property type="evidence" value="ECO:0007669"/>
    <property type="project" value="UniProtKB-KW"/>
</dbReference>
<dbReference type="GO" id="GO:0004639">
    <property type="term" value="F:phosphoribosylaminoimidazolesuccinocarboxamide synthase activity"/>
    <property type="evidence" value="ECO:0007669"/>
    <property type="project" value="UniProtKB-UniRule"/>
</dbReference>
<dbReference type="GO" id="GO:0006189">
    <property type="term" value="P:'de novo' IMP biosynthetic process"/>
    <property type="evidence" value="ECO:0007669"/>
    <property type="project" value="UniProtKB-UniRule"/>
</dbReference>
<dbReference type="GO" id="GO:0009236">
    <property type="term" value="P:cobalamin biosynthetic process"/>
    <property type="evidence" value="ECO:0007669"/>
    <property type="project" value="InterPro"/>
</dbReference>
<dbReference type="CDD" id="cd01415">
    <property type="entry name" value="SAICAR_synt_PurC"/>
    <property type="match status" value="1"/>
</dbReference>
<dbReference type="FunFam" id="3.30.470.20:FF:000006">
    <property type="entry name" value="Phosphoribosylaminoimidazole-succinocarboxamide synthase"/>
    <property type="match status" value="1"/>
</dbReference>
<dbReference type="Gene3D" id="3.30.470.20">
    <property type="entry name" value="ATP-grasp fold, B domain"/>
    <property type="match status" value="1"/>
</dbReference>
<dbReference type="Gene3D" id="3.30.200.20">
    <property type="entry name" value="Phosphorylase Kinase, domain 1"/>
    <property type="match status" value="1"/>
</dbReference>
<dbReference type="HAMAP" id="MF_00137">
    <property type="entry name" value="SAICAR_synth"/>
    <property type="match status" value="1"/>
</dbReference>
<dbReference type="InterPro" id="IPR028923">
    <property type="entry name" value="SAICAR_synt/ADE2_N"/>
</dbReference>
<dbReference type="InterPro" id="IPR033934">
    <property type="entry name" value="SAICAR_synt_PurC"/>
</dbReference>
<dbReference type="InterPro" id="IPR001636">
    <property type="entry name" value="SAICAR_synth"/>
</dbReference>
<dbReference type="InterPro" id="IPR050089">
    <property type="entry name" value="SAICAR_synthetase"/>
</dbReference>
<dbReference type="InterPro" id="IPR018236">
    <property type="entry name" value="SAICAR_synthetase_CS"/>
</dbReference>
<dbReference type="NCBIfam" id="TIGR00081">
    <property type="entry name" value="purC"/>
    <property type="match status" value="1"/>
</dbReference>
<dbReference type="PANTHER" id="PTHR43599">
    <property type="entry name" value="MULTIFUNCTIONAL PROTEIN ADE2"/>
    <property type="match status" value="1"/>
</dbReference>
<dbReference type="PANTHER" id="PTHR43599:SF3">
    <property type="entry name" value="SI:DKEY-6E2.2"/>
    <property type="match status" value="1"/>
</dbReference>
<dbReference type="Pfam" id="PF01259">
    <property type="entry name" value="SAICAR_synt"/>
    <property type="match status" value="1"/>
</dbReference>
<dbReference type="SUPFAM" id="SSF56104">
    <property type="entry name" value="SAICAR synthase-like"/>
    <property type="match status" value="1"/>
</dbReference>
<dbReference type="PROSITE" id="PS01057">
    <property type="entry name" value="SAICAR_SYNTHETASE_1"/>
    <property type="match status" value="1"/>
</dbReference>
<dbReference type="PROSITE" id="PS01058">
    <property type="entry name" value="SAICAR_SYNTHETASE_2"/>
    <property type="match status" value="1"/>
</dbReference>
<proteinExistence type="inferred from homology"/>
<feature type="chain" id="PRO_1000018714" description="Phosphoribosylaminoimidazole-succinocarboxamide synthase">
    <location>
        <begin position="1"/>
        <end position="259"/>
    </location>
</feature>
<evidence type="ECO:0000255" key="1">
    <source>
        <dbReference type="HAMAP-Rule" id="MF_00137"/>
    </source>
</evidence>